<feature type="chain" id="PRO_0000340218" description="Sulfate adenylyltransferase subunit 2">
    <location>
        <begin position="1"/>
        <end position="296"/>
    </location>
</feature>
<proteinExistence type="inferred from homology"/>
<protein>
    <recommendedName>
        <fullName evidence="1">Sulfate adenylyltransferase subunit 2</fullName>
        <ecNumber evidence="1">2.7.7.4</ecNumber>
    </recommendedName>
    <alternativeName>
        <fullName evidence="1">ATP-sulfurylase small subunit</fullName>
    </alternativeName>
    <alternativeName>
        <fullName evidence="1">Sulfate adenylate transferase</fullName>
        <shortName evidence="1">SAT</shortName>
    </alternativeName>
</protein>
<keyword id="KW-0067">ATP-binding</keyword>
<keyword id="KW-0547">Nucleotide-binding</keyword>
<keyword id="KW-0548">Nucleotidyltransferase</keyword>
<keyword id="KW-1185">Reference proteome</keyword>
<keyword id="KW-0808">Transferase</keyword>
<name>CYSD_RHORT</name>
<organism>
    <name type="scientific">Rhodospirillum rubrum (strain ATCC 11170 / ATH 1.1.1 / DSM 467 / LMG 4362 / NCIMB 8255 / S1)</name>
    <dbReference type="NCBI Taxonomy" id="269796"/>
    <lineage>
        <taxon>Bacteria</taxon>
        <taxon>Pseudomonadati</taxon>
        <taxon>Pseudomonadota</taxon>
        <taxon>Alphaproteobacteria</taxon>
        <taxon>Rhodospirillales</taxon>
        <taxon>Rhodospirillaceae</taxon>
        <taxon>Rhodospirillum</taxon>
    </lineage>
</organism>
<evidence type="ECO:0000255" key="1">
    <source>
        <dbReference type="HAMAP-Rule" id="MF_00064"/>
    </source>
</evidence>
<sequence>MKHLDSLEAESIHILRETAAQFRKPVLMYSIGKDSSVLLHLARKAFYPSRPPFPFLHIDTTWKFHEMIAFRDKRVAEEGVDLIVHTNRAGVEAGVSPFTHGAAYTDIMKTQALREALTQGGFDGVIGGARRDEEKSRAKERVFSFRDAHHRWDPKNQRPELWNTYNGRVGKGESVRVFPLSNWTELDIWLYILRESIPVVPLYLAKPRPVVERDGALIMVDDNRLPLEPGETPQTRWVRFRTLGCYPLTGAIESRAASLPEIIAEMLVARTSERQGRLIDQDQAASMEMKKQEGYF</sequence>
<gene>
    <name evidence="1" type="primary">cysD</name>
    <name type="ordered locus">Rru_A2289</name>
</gene>
<reference key="1">
    <citation type="journal article" date="2011" name="Stand. Genomic Sci.">
        <title>Complete genome sequence of Rhodospirillum rubrum type strain (S1).</title>
        <authorList>
            <person name="Munk A.C."/>
            <person name="Copeland A."/>
            <person name="Lucas S."/>
            <person name="Lapidus A."/>
            <person name="Del Rio T.G."/>
            <person name="Barry K."/>
            <person name="Detter J.C."/>
            <person name="Hammon N."/>
            <person name="Israni S."/>
            <person name="Pitluck S."/>
            <person name="Brettin T."/>
            <person name="Bruce D."/>
            <person name="Han C."/>
            <person name="Tapia R."/>
            <person name="Gilna P."/>
            <person name="Schmutz J."/>
            <person name="Larimer F."/>
            <person name="Land M."/>
            <person name="Kyrpides N.C."/>
            <person name="Mavromatis K."/>
            <person name="Richardson P."/>
            <person name="Rohde M."/>
            <person name="Goeker M."/>
            <person name="Klenk H.P."/>
            <person name="Zhang Y."/>
            <person name="Roberts G.P."/>
            <person name="Reslewic S."/>
            <person name="Schwartz D.C."/>
        </authorList>
    </citation>
    <scope>NUCLEOTIDE SEQUENCE [LARGE SCALE GENOMIC DNA]</scope>
    <source>
        <strain>ATCC 11170 / ATH 1.1.1 / DSM 467 / LMG 4362 / NCIMB 8255 / S1</strain>
    </source>
</reference>
<dbReference type="EC" id="2.7.7.4" evidence="1"/>
<dbReference type="EMBL" id="CP000230">
    <property type="protein sequence ID" value="ABC23089.1"/>
    <property type="molecule type" value="Genomic_DNA"/>
</dbReference>
<dbReference type="RefSeq" id="WP_011389944.1">
    <property type="nucleotide sequence ID" value="NC_007643.1"/>
</dbReference>
<dbReference type="RefSeq" id="YP_427376.1">
    <property type="nucleotide sequence ID" value="NC_007643.1"/>
</dbReference>
<dbReference type="SMR" id="Q2RS06"/>
<dbReference type="STRING" id="269796.Rru_A2289"/>
<dbReference type="EnsemblBacteria" id="ABC23089">
    <property type="protein sequence ID" value="ABC23089"/>
    <property type="gene ID" value="Rru_A2289"/>
</dbReference>
<dbReference type="KEGG" id="rru:Rru_A2289"/>
<dbReference type="PATRIC" id="fig|269796.9.peg.2386"/>
<dbReference type="eggNOG" id="COG0175">
    <property type="taxonomic scope" value="Bacteria"/>
</dbReference>
<dbReference type="HOGENOM" id="CLU_043026_0_0_5"/>
<dbReference type="PhylomeDB" id="Q2RS06"/>
<dbReference type="UniPathway" id="UPA00140">
    <property type="reaction ID" value="UER00204"/>
</dbReference>
<dbReference type="Proteomes" id="UP000001929">
    <property type="component" value="Chromosome"/>
</dbReference>
<dbReference type="GO" id="GO:0005524">
    <property type="term" value="F:ATP binding"/>
    <property type="evidence" value="ECO:0007669"/>
    <property type="project" value="UniProtKB-KW"/>
</dbReference>
<dbReference type="GO" id="GO:0004781">
    <property type="term" value="F:sulfate adenylyltransferase (ATP) activity"/>
    <property type="evidence" value="ECO:0007669"/>
    <property type="project" value="UniProtKB-UniRule"/>
</dbReference>
<dbReference type="GO" id="GO:0070814">
    <property type="term" value="P:hydrogen sulfide biosynthetic process"/>
    <property type="evidence" value="ECO:0007669"/>
    <property type="project" value="UniProtKB-UniRule"/>
</dbReference>
<dbReference type="GO" id="GO:0000103">
    <property type="term" value="P:sulfate assimilation"/>
    <property type="evidence" value="ECO:0007669"/>
    <property type="project" value="UniProtKB-UniRule"/>
</dbReference>
<dbReference type="FunFam" id="3.40.50.620:FF:000002">
    <property type="entry name" value="Sulfate adenylyltransferase subunit 2"/>
    <property type="match status" value="1"/>
</dbReference>
<dbReference type="Gene3D" id="3.40.50.620">
    <property type="entry name" value="HUPs"/>
    <property type="match status" value="1"/>
</dbReference>
<dbReference type="HAMAP" id="MF_00064">
    <property type="entry name" value="Sulf_adenylyltr_sub2"/>
    <property type="match status" value="1"/>
</dbReference>
<dbReference type="InterPro" id="IPR002500">
    <property type="entry name" value="PAPS_reduct_dom"/>
</dbReference>
<dbReference type="InterPro" id="IPR014729">
    <property type="entry name" value="Rossmann-like_a/b/a_fold"/>
</dbReference>
<dbReference type="InterPro" id="IPR011784">
    <property type="entry name" value="SO4_adenylTrfase_ssu"/>
</dbReference>
<dbReference type="InterPro" id="IPR050128">
    <property type="entry name" value="Sulfate_adenylyltrnsfr_sub2"/>
</dbReference>
<dbReference type="NCBIfam" id="TIGR02039">
    <property type="entry name" value="CysD"/>
    <property type="match status" value="1"/>
</dbReference>
<dbReference type="NCBIfam" id="NF003587">
    <property type="entry name" value="PRK05253.1"/>
    <property type="match status" value="1"/>
</dbReference>
<dbReference type="NCBIfam" id="NF009214">
    <property type="entry name" value="PRK12563.1"/>
    <property type="match status" value="1"/>
</dbReference>
<dbReference type="PANTHER" id="PTHR43196">
    <property type="entry name" value="SULFATE ADENYLYLTRANSFERASE SUBUNIT 2"/>
    <property type="match status" value="1"/>
</dbReference>
<dbReference type="PANTHER" id="PTHR43196:SF1">
    <property type="entry name" value="SULFATE ADENYLYLTRANSFERASE SUBUNIT 2"/>
    <property type="match status" value="1"/>
</dbReference>
<dbReference type="Pfam" id="PF01507">
    <property type="entry name" value="PAPS_reduct"/>
    <property type="match status" value="1"/>
</dbReference>
<dbReference type="PIRSF" id="PIRSF002936">
    <property type="entry name" value="CysDAde_trans"/>
    <property type="match status" value="1"/>
</dbReference>
<dbReference type="SUPFAM" id="SSF52402">
    <property type="entry name" value="Adenine nucleotide alpha hydrolases-like"/>
    <property type="match status" value="1"/>
</dbReference>
<accession>Q2RS06</accession>
<comment type="function">
    <text evidence="1">With CysN forms the ATP sulfurylase (ATPS) that catalyzes the adenylation of sulfate producing adenosine 5'-phosphosulfate (APS) and diphosphate, the first enzymatic step in sulfur assimilation pathway. APS synthesis involves the formation of a high-energy phosphoric-sulfuric acid anhydride bond driven by GTP hydrolysis by CysN coupled to ATP hydrolysis by CysD.</text>
</comment>
<comment type="catalytic activity">
    <reaction evidence="1">
        <text>sulfate + ATP + H(+) = adenosine 5'-phosphosulfate + diphosphate</text>
        <dbReference type="Rhea" id="RHEA:18133"/>
        <dbReference type="ChEBI" id="CHEBI:15378"/>
        <dbReference type="ChEBI" id="CHEBI:16189"/>
        <dbReference type="ChEBI" id="CHEBI:30616"/>
        <dbReference type="ChEBI" id="CHEBI:33019"/>
        <dbReference type="ChEBI" id="CHEBI:58243"/>
        <dbReference type="EC" id="2.7.7.4"/>
    </reaction>
</comment>
<comment type="pathway">
    <text evidence="1">Sulfur metabolism; hydrogen sulfide biosynthesis; sulfite from sulfate: step 1/3.</text>
</comment>
<comment type="subunit">
    <text evidence="1">Heterodimer composed of CysD, the smaller subunit, and CysN.</text>
</comment>
<comment type="similarity">
    <text evidence="1">Belongs to the PAPS reductase family. CysD subfamily.</text>
</comment>